<sequence length="89" mass="10347">MSEDTRNSRKVIQGRVVSDKMDKTIVVIVETYKNHPVYGKRVRYSKKFKAHDEKNEAKTGDIVKIMETRPLSATKRFRLIEVVQKAVII</sequence>
<evidence type="ECO:0000255" key="1">
    <source>
        <dbReference type="HAMAP-Rule" id="MF_01345"/>
    </source>
</evidence>
<evidence type="ECO:0000305" key="2"/>
<feature type="chain" id="PRO_0000233492" description="Small ribosomal subunit protein uS17">
    <location>
        <begin position="1"/>
        <end position="89"/>
    </location>
</feature>
<dbReference type="EMBL" id="AL935263">
    <property type="protein sequence ID" value="CCC78453.1"/>
    <property type="molecule type" value="Genomic_DNA"/>
</dbReference>
<dbReference type="RefSeq" id="WP_003638069.1">
    <property type="nucleotide sequence ID" value="NC_004567.2"/>
</dbReference>
<dbReference type="RefSeq" id="YP_004888967.1">
    <property type="nucleotide sequence ID" value="NC_004567.2"/>
</dbReference>
<dbReference type="SMR" id="Q88XX7"/>
<dbReference type="STRING" id="220668.lp_1044"/>
<dbReference type="EnsemblBacteria" id="CCC78453">
    <property type="protein sequence ID" value="CCC78453"/>
    <property type="gene ID" value="lp_1044"/>
</dbReference>
<dbReference type="GeneID" id="79806694"/>
<dbReference type="KEGG" id="lpl:lp_1044"/>
<dbReference type="PATRIC" id="fig|220668.9.peg.880"/>
<dbReference type="eggNOG" id="COG0186">
    <property type="taxonomic scope" value="Bacteria"/>
</dbReference>
<dbReference type="HOGENOM" id="CLU_073626_1_0_9"/>
<dbReference type="OrthoDB" id="9811714at2"/>
<dbReference type="PhylomeDB" id="Q88XX7"/>
<dbReference type="Proteomes" id="UP000000432">
    <property type="component" value="Chromosome"/>
</dbReference>
<dbReference type="GO" id="GO:0022627">
    <property type="term" value="C:cytosolic small ribosomal subunit"/>
    <property type="evidence" value="ECO:0007669"/>
    <property type="project" value="TreeGrafter"/>
</dbReference>
<dbReference type="GO" id="GO:0019843">
    <property type="term" value="F:rRNA binding"/>
    <property type="evidence" value="ECO:0007669"/>
    <property type="project" value="UniProtKB-UniRule"/>
</dbReference>
<dbReference type="GO" id="GO:0003735">
    <property type="term" value="F:structural constituent of ribosome"/>
    <property type="evidence" value="ECO:0007669"/>
    <property type="project" value="InterPro"/>
</dbReference>
<dbReference type="GO" id="GO:0006412">
    <property type="term" value="P:translation"/>
    <property type="evidence" value="ECO:0007669"/>
    <property type="project" value="UniProtKB-UniRule"/>
</dbReference>
<dbReference type="CDD" id="cd00364">
    <property type="entry name" value="Ribosomal_uS17"/>
    <property type="match status" value="1"/>
</dbReference>
<dbReference type="FunFam" id="2.40.50.140:FF:000026">
    <property type="entry name" value="30S ribosomal protein S17"/>
    <property type="match status" value="1"/>
</dbReference>
<dbReference type="Gene3D" id="2.40.50.140">
    <property type="entry name" value="Nucleic acid-binding proteins"/>
    <property type="match status" value="1"/>
</dbReference>
<dbReference type="HAMAP" id="MF_01345_B">
    <property type="entry name" value="Ribosomal_uS17_B"/>
    <property type="match status" value="1"/>
</dbReference>
<dbReference type="InterPro" id="IPR012340">
    <property type="entry name" value="NA-bd_OB-fold"/>
</dbReference>
<dbReference type="InterPro" id="IPR000266">
    <property type="entry name" value="Ribosomal_uS17"/>
</dbReference>
<dbReference type="InterPro" id="IPR019984">
    <property type="entry name" value="Ribosomal_uS17_bact/chlr"/>
</dbReference>
<dbReference type="InterPro" id="IPR019979">
    <property type="entry name" value="Ribosomal_uS17_CS"/>
</dbReference>
<dbReference type="NCBIfam" id="NF004123">
    <property type="entry name" value="PRK05610.1"/>
    <property type="match status" value="1"/>
</dbReference>
<dbReference type="NCBIfam" id="TIGR03635">
    <property type="entry name" value="uS17_bact"/>
    <property type="match status" value="1"/>
</dbReference>
<dbReference type="PANTHER" id="PTHR10744">
    <property type="entry name" value="40S RIBOSOMAL PROTEIN S11 FAMILY MEMBER"/>
    <property type="match status" value="1"/>
</dbReference>
<dbReference type="PANTHER" id="PTHR10744:SF1">
    <property type="entry name" value="SMALL RIBOSOMAL SUBUNIT PROTEIN US17M"/>
    <property type="match status" value="1"/>
</dbReference>
<dbReference type="Pfam" id="PF00366">
    <property type="entry name" value="Ribosomal_S17"/>
    <property type="match status" value="1"/>
</dbReference>
<dbReference type="PRINTS" id="PR00973">
    <property type="entry name" value="RIBOSOMALS17"/>
</dbReference>
<dbReference type="SUPFAM" id="SSF50249">
    <property type="entry name" value="Nucleic acid-binding proteins"/>
    <property type="match status" value="1"/>
</dbReference>
<dbReference type="PROSITE" id="PS00056">
    <property type="entry name" value="RIBOSOMAL_S17"/>
    <property type="match status" value="1"/>
</dbReference>
<organism>
    <name type="scientific">Lactiplantibacillus plantarum (strain ATCC BAA-793 / NCIMB 8826 / WCFS1)</name>
    <name type="common">Lactobacillus plantarum</name>
    <dbReference type="NCBI Taxonomy" id="220668"/>
    <lineage>
        <taxon>Bacteria</taxon>
        <taxon>Bacillati</taxon>
        <taxon>Bacillota</taxon>
        <taxon>Bacilli</taxon>
        <taxon>Lactobacillales</taxon>
        <taxon>Lactobacillaceae</taxon>
        <taxon>Lactiplantibacillus</taxon>
    </lineage>
</organism>
<comment type="function">
    <text evidence="1">One of the primary rRNA binding proteins, it binds specifically to the 5'-end of 16S ribosomal RNA.</text>
</comment>
<comment type="subunit">
    <text evidence="1">Part of the 30S ribosomal subunit.</text>
</comment>
<comment type="similarity">
    <text evidence="1">Belongs to the universal ribosomal protein uS17 family.</text>
</comment>
<proteinExistence type="inferred from homology"/>
<keyword id="KW-1185">Reference proteome</keyword>
<keyword id="KW-0687">Ribonucleoprotein</keyword>
<keyword id="KW-0689">Ribosomal protein</keyword>
<keyword id="KW-0694">RNA-binding</keyword>
<keyword id="KW-0699">rRNA-binding</keyword>
<name>RS17_LACPL</name>
<protein>
    <recommendedName>
        <fullName evidence="1">Small ribosomal subunit protein uS17</fullName>
    </recommendedName>
    <alternativeName>
        <fullName evidence="2">30S ribosomal protein S17</fullName>
    </alternativeName>
</protein>
<gene>
    <name evidence="1" type="primary">rpsQ</name>
    <name type="ordered locus">lp_1044</name>
</gene>
<reference key="1">
    <citation type="journal article" date="2003" name="Proc. Natl. Acad. Sci. U.S.A.">
        <title>Complete genome sequence of Lactobacillus plantarum WCFS1.</title>
        <authorList>
            <person name="Kleerebezem M."/>
            <person name="Boekhorst J."/>
            <person name="van Kranenburg R."/>
            <person name="Molenaar D."/>
            <person name="Kuipers O.P."/>
            <person name="Leer R."/>
            <person name="Tarchini R."/>
            <person name="Peters S.A."/>
            <person name="Sandbrink H.M."/>
            <person name="Fiers M.W.E.J."/>
            <person name="Stiekema W."/>
            <person name="Klein Lankhorst R.M."/>
            <person name="Bron P.A."/>
            <person name="Hoffer S.M."/>
            <person name="Nierop Groot M.N."/>
            <person name="Kerkhoven R."/>
            <person name="De Vries M."/>
            <person name="Ursing B."/>
            <person name="De Vos W.M."/>
            <person name="Siezen R.J."/>
        </authorList>
    </citation>
    <scope>NUCLEOTIDE SEQUENCE [LARGE SCALE GENOMIC DNA]</scope>
    <source>
        <strain>ATCC BAA-793 / NCIMB 8826 / WCFS1</strain>
    </source>
</reference>
<reference key="2">
    <citation type="journal article" date="2012" name="J. Bacteriol.">
        <title>Complete resequencing and reannotation of the Lactobacillus plantarum WCFS1 genome.</title>
        <authorList>
            <person name="Siezen R.J."/>
            <person name="Francke C."/>
            <person name="Renckens B."/>
            <person name="Boekhorst J."/>
            <person name="Wels M."/>
            <person name="Kleerebezem M."/>
            <person name="van Hijum S.A."/>
        </authorList>
    </citation>
    <scope>NUCLEOTIDE SEQUENCE [LARGE SCALE GENOMIC DNA]</scope>
    <scope>GENOME REANNOTATION</scope>
    <source>
        <strain>ATCC BAA-793 / NCIMB 8826 / WCFS1</strain>
    </source>
</reference>
<accession>Q88XX7</accession>
<accession>F9UML4</accession>